<dbReference type="EC" id="3.4.24.-" evidence="1"/>
<dbReference type="EMBL" id="AB032368">
    <property type="protein sequence ID" value="BAA96090.1"/>
    <property type="molecule type" value="Genomic_DNA"/>
</dbReference>
<dbReference type="EMBL" id="AP008226">
    <property type="protein sequence ID" value="BAD71315.1"/>
    <property type="molecule type" value="Genomic_DNA"/>
</dbReference>
<dbReference type="EMBL" id="AB012390">
    <property type="status" value="NOT_ANNOTATED_CDS"/>
    <property type="molecule type" value="Genomic_DNA"/>
</dbReference>
<dbReference type="RefSeq" id="WP_011173542.1">
    <property type="nucleotide sequence ID" value="NC_006461.1"/>
</dbReference>
<dbReference type="RefSeq" id="YP_144758.1">
    <property type="nucleotide sequence ID" value="NC_006461.1"/>
</dbReference>
<dbReference type="PDB" id="1IXZ">
    <property type="method" value="X-ray"/>
    <property type="resolution" value="2.20 A"/>
    <property type="chains" value="A=146-393"/>
</dbReference>
<dbReference type="PDB" id="1IY0">
    <property type="method" value="X-ray"/>
    <property type="resolution" value="2.95 A"/>
    <property type="chains" value="A=146-393"/>
</dbReference>
<dbReference type="PDB" id="1IY1">
    <property type="method" value="X-ray"/>
    <property type="resolution" value="2.80 A"/>
    <property type="chains" value="A=146-393"/>
</dbReference>
<dbReference type="PDB" id="1IY2">
    <property type="method" value="X-ray"/>
    <property type="resolution" value="3.20 A"/>
    <property type="chains" value="A=126-393"/>
</dbReference>
<dbReference type="PDB" id="2DHR">
    <property type="method" value="X-ray"/>
    <property type="resolution" value="3.90 A"/>
    <property type="chains" value="A/B/C/D/E/F=126-624"/>
</dbReference>
<dbReference type="PDB" id="4EIW">
    <property type="method" value="X-ray"/>
    <property type="resolution" value="3.90 A"/>
    <property type="chains" value="A/B/C/D/E/F=126-624"/>
</dbReference>
<dbReference type="PDB" id="8VW9">
    <property type="method" value="EM"/>
    <property type="resolution" value="2.60 A"/>
    <property type="chains" value="A=152-591"/>
</dbReference>
<dbReference type="PDB" id="8VWA">
    <property type="method" value="EM"/>
    <property type="resolution" value="2.50 A"/>
    <property type="chains" value="A=152-591"/>
</dbReference>
<dbReference type="PDB" id="8VWB">
    <property type="method" value="EM"/>
    <property type="resolution" value="2.70 A"/>
    <property type="chains" value="A=152-591"/>
</dbReference>
<dbReference type="PDB" id="8VWC">
    <property type="method" value="EM"/>
    <property type="resolution" value="2.60 A"/>
    <property type="chains" value="A=152-591"/>
</dbReference>
<dbReference type="PDBsum" id="1IXZ"/>
<dbReference type="PDBsum" id="1IY0"/>
<dbReference type="PDBsum" id="1IY1"/>
<dbReference type="PDBsum" id="1IY2"/>
<dbReference type="PDBsum" id="2DHR"/>
<dbReference type="PDBsum" id="4EIW"/>
<dbReference type="PDBsum" id="8VW9"/>
<dbReference type="PDBsum" id="8VWA"/>
<dbReference type="PDBsum" id="8VWB"/>
<dbReference type="PDBsum" id="8VWC"/>
<dbReference type="SMR" id="Q5SI82"/>
<dbReference type="MEROPS" id="M41.013"/>
<dbReference type="EnsemblBacteria" id="BAD71315">
    <property type="protein sequence ID" value="BAD71315"/>
    <property type="gene ID" value="BAD71315"/>
</dbReference>
<dbReference type="GeneID" id="3170023"/>
<dbReference type="KEGG" id="ttj:TTHA1492"/>
<dbReference type="PATRIC" id="fig|300852.9.peg.1467"/>
<dbReference type="eggNOG" id="COG0465">
    <property type="taxonomic scope" value="Bacteria"/>
</dbReference>
<dbReference type="HOGENOM" id="CLU_000688_16_2_0"/>
<dbReference type="PhylomeDB" id="Q5SI82"/>
<dbReference type="BRENDA" id="3.4.24.B17">
    <property type="organism ID" value="2305"/>
</dbReference>
<dbReference type="EvolutionaryTrace" id="Q5SI82"/>
<dbReference type="Proteomes" id="UP000000532">
    <property type="component" value="Chromosome"/>
</dbReference>
<dbReference type="GO" id="GO:0005886">
    <property type="term" value="C:plasma membrane"/>
    <property type="evidence" value="ECO:0007669"/>
    <property type="project" value="UniProtKB-SubCell"/>
</dbReference>
<dbReference type="GO" id="GO:0005524">
    <property type="term" value="F:ATP binding"/>
    <property type="evidence" value="ECO:0007669"/>
    <property type="project" value="UniProtKB-UniRule"/>
</dbReference>
<dbReference type="GO" id="GO:0016887">
    <property type="term" value="F:ATP hydrolysis activity"/>
    <property type="evidence" value="ECO:0007669"/>
    <property type="project" value="UniProtKB-UniRule"/>
</dbReference>
<dbReference type="GO" id="GO:0004176">
    <property type="term" value="F:ATP-dependent peptidase activity"/>
    <property type="evidence" value="ECO:0007669"/>
    <property type="project" value="InterPro"/>
</dbReference>
<dbReference type="GO" id="GO:0004222">
    <property type="term" value="F:metalloendopeptidase activity"/>
    <property type="evidence" value="ECO:0007669"/>
    <property type="project" value="InterPro"/>
</dbReference>
<dbReference type="GO" id="GO:0008270">
    <property type="term" value="F:zinc ion binding"/>
    <property type="evidence" value="ECO:0007669"/>
    <property type="project" value="UniProtKB-UniRule"/>
</dbReference>
<dbReference type="GO" id="GO:0030163">
    <property type="term" value="P:protein catabolic process"/>
    <property type="evidence" value="ECO:0007669"/>
    <property type="project" value="UniProtKB-UniRule"/>
</dbReference>
<dbReference type="GO" id="GO:0006508">
    <property type="term" value="P:proteolysis"/>
    <property type="evidence" value="ECO:0007669"/>
    <property type="project" value="UniProtKB-KW"/>
</dbReference>
<dbReference type="CDD" id="cd19501">
    <property type="entry name" value="RecA-like_FtsH"/>
    <property type="match status" value="1"/>
</dbReference>
<dbReference type="FunFam" id="1.10.8.60:FF:000001">
    <property type="entry name" value="ATP-dependent zinc metalloprotease FtsH"/>
    <property type="match status" value="1"/>
</dbReference>
<dbReference type="FunFam" id="1.20.58.760:FF:000001">
    <property type="entry name" value="ATP-dependent zinc metalloprotease FtsH"/>
    <property type="match status" value="1"/>
</dbReference>
<dbReference type="FunFam" id="3.40.50.300:FF:000001">
    <property type="entry name" value="ATP-dependent zinc metalloprotease FtsH"/>
    <property type="match status" value="1"/>
</dbReference>
<dbReference type="Gene3D" id="1.10.8.60">
    <property type="match status" value="1"/>
</dbReference>
<dbReference type="Gene3D" id="3.30.720.210">
    <property type="match status" value="1"/>
</dbReference>
<dbReference type="Gene3D" id="3.40.50.300">
    <property type="entry name" value="P-loop containing nucleotide triphosphate hydrolases"/>
    <property type="match status" value="1"/>
</dbReference>
<dbReference type="Gene3D" id="1.20.58.760">
    <property type="entry name" value="Peptidase M41"/>
    <property type="match status" value="1"/>
</dbReference>
<dbReference type="HAMAP" id="MF_01458">
    <property type="entry name" value="FtsH"/>
    <property type="match status" value="1"/>
</dbReference>
<dbReference type="InterPro" id="IPR003593">
    <property type="entry name" value="AAA+_ATPase"/>
</dbReference>
<dbReference type="InterPro" id="IPR041569">
    <property type="entry name" value="AAA_lid_3"/>
</dbReference>
<dbReference type="InterPro" id="IPR003959">
    <property type="entry name" value="ATPase_AAA_core"/>
</dbReference>
<dbReference type="InterPro" id="IPR003960">
    <property type="entry name" value="ATPase_AAA_CS"/>
</dbReference>
<dbReference type="InterPro" id="IPR005936">
    <property type="entry name" value="FtsH"/>
</dbReference>
<dbReference type="InterPro" id="IPR027417">
    <property type="entry name" value="P-loop_NTPase"/>
</dbReference>
<dbReference type="InterPro" id="IPR011546">
    <property type="entry name" value="Pept_M41_FtsH_extracell"/>
</dbReference>
<dbReference type="InterPro" id="IPR000642">
    <property type="entry name" value="Peptidase_M41"/>
</dbReference>
<dbReference type="InterPro" id="IPR037219">
    <property type="entry name" value="Peptidase_M41-like"/>
</dbReference>
<dbReference type="NCBIfam" id="TIGR01241">
    <property type="entry name" value="FtsH_fam"/>
    <property type="match status" value="1"/>
</dbReference>
<dbReference type="PANTHER" id="PTHR23076:SF97">
    <property type="entry name" value="ATP-DEPENDENT ZINC METALLOPROTEASE YME1L1"/>
    <property type="match status" value="1"/>
</dbReference>
<dbReference type="PANTHER" id="PTHR23076">
    <property type="entry name" value="METALLOPROTEASE M41 FTSH"/>
    <property type="match status" value="1"/>
</dbReference>
<dbReference type="Pfam" id="PF00004">
    <property type="entry name" value="AAA"/>
    <property type="match status" value="1"/>
</dbReference>
<dbReference type="Pfam" id="PF17862">
    <property type="entry name" value="AAA_lid_3"/>
    <property type="match status" value="1"/>
</dbReference>
<dbReference type="Pfam" id="PF06480">
    <property type="entry name" value="FtsH_ext"/>
    <property type="match status" value="1"/>
</dbReference>
<dbReference type="Pfam" id="PF01434">
    <property type="entry name" value="Peptidase_M41"/>
    <property type="match status" value="1"/>
</dbReference>
<dbReference type="SMART" id="SM00382">
    <property type="entry name" value="AAA"/>
    <property type="match status" value="1"/>
</dbReference>
<dbReference type="SUPFAM" id="SSF140990">
    <property type="entry name" value="FtsH protease domain-like"/>
    <property type="match status" value="1"/>
</dbReference>
<dbReference type="SUPFAM" id="SSF52540">
    <property type="entry name" value="P-loop containing nucleoside triphosphate hydrolases"/>
    <property type="match status" value="1"/>
</dbReference>
<dbReference type="PROSITE" id="PS00674">
    <property type="entry name" value="AAA"/>
    <property type="match status" value="1"/>
</dbReference>
<keyword id="KW-0002">3D-structure</keyword>
<keyword id="KW-0067">ATP-binding</keyword>
<keyword id="KW-0997">Cell inner membrane</keyword>
<keyword id="KW-1003">Cell membrane</keyword>
<keyword id="KW-0378">Hydrolase</keyword>
<keyword id="KW-0472">Membrane</keyword>
<keyword id="KW-0479">Metal-binding</keyword>
<keyword id="KW-0482">Metalloprotease</keyword>
<keyword id="KW-0547">Nucleotide-binding</keyword>
<keyword id="KW-0645">Protease</keyword>
<keyword id="KW-1185">Reference proteome</keyword>
<keyword id="KW-0812">Transmembrane</keyword>
<keyword id="KW-1133">Transmembrane helix</keyword>
<keyword id="KW-0862">Zinc</keyword>
<proteinExistence type="evidence at protein level"/>
<protein>
    <recommendedName>
        <fullName evidence="1">ATP-dependent zinc metalloprotease FtsH</fullName>
        <ecNumber evidence="1">3.4.24.-</ecNumber>
    </recommendedName>
</protein>
<name>FTSH_THET8</name>
<reference key="1">
    <citation type="journal article" date="2000" name="J. Biochem.">
        <title>FtsH recognizes proteins with unfolded structure and hydrolyzes the carboxyl side of hydrophobic residues.</title>
        <authorList>
            <person name="Asahara Y."/>
            <person name="Atsuta K."/>
            <person name="Motohashi K."/>
            <person name="Taguchi H."/>
            <person name="Yohda M."/>
            <person name="Yoshida M."/>
        </authorList>
    </citation>
    <scope>NUCLEOTIDE SEQUENCE [GENOMIC DNA]</scope>
    <scope>SUBCELLULAR LOCATION</scope>
    <scope>ATPASE ACTIVITY</scope>
    <scope>PROCESSIVE PROTEASE ACTIVITY</scope>
    <scope>ACTIVITY REGULATION</scope>
    <scope>ZINC COFACTOR</scope>
</reference>
<reference key="2">
    <citation type="submission" date="2004-11" db="EMBL/GenBank/DDBJ databases">
        <title>Complete genome sequence of Thermus thermophilus HB8.</title>
        <authorList>
            <person name="Masui R."/>
            <person name="Kurokawa K."/>
            <person name="Nakagawa N."/>
            <person name="Tokunaga F."/>
            <person name="Koyama Y."/>
            <person name="Shibata T."/>
            <person name="Oshima T."/>
            <person name="Yokoyama S."/>
            <person name="Yasunaga T."/>
            <person name="Kuramitsu S."/>
        </authorList>
    </citation>
    <scope>NUCLEOTIDE SEQUENCE [LARGE SCALE GENOMIC DNA]</scope>
    <source>
        <strain>ATCC 27634 / DSM 579 / HB8</strain>
    </source>
</reference>
<reference key="3">
    <citation type="journal article" date="1999" name="Proc. Natl. Acad. Sci. U.S.A.">
        <title>Heat-inactivated proteins are rescued by the DnaK/J-GrpE set and ClpB chaperones.</title>
        <authorList>
            <person name="Motohashi K."/>
            <person name="Watanabe Y.H."/>
            <person name="Yohda M."/>
            <person name="Yoshida M."/>
        </authorList>
    </citation>
    <scope>NUCLEOTIDE SEQUENCE [GENOMIC DNA] OF 1-61</scope>
</reference>
<reference key="4">
    <citation type="journal article" date="2002" name="Structure">
        <title>Hexameric ring structure of the ATPase domain of the membrane-integrated metalloprotease FtsH from Thermus thermophilus HB8.</title>
        <authorList>
            <person name="Niwa H."/>
            <person name="Tsuchiya D."/>
            <person name="Makyio H."/>
            <person name="Yoshida M."/>
            <person name="Morikawa K."/>
        </authorList>
    </citation>
    <scope>X-RAY CRYSTALLOGRAPHY (2.2 ANGSTROMS) OF 146-393 WITHOUT NUCLEOTIDE</scope>
    <scope>COMPLEXED WITH ADP OR AMP-PNP</scope>
    <scope>X-RAY CRYSTALLOGRAPHY (3.2 ANGSTROMS) OF 126-393</scope>
    <scope>POSSIBLE SUBUNIT</scope>
</reference>
<reference key="5">
    <citation type="journal article" date="2006" name="Mol. Cell">
        <title>Structure of the whole cytosolic region of ATP-dependent protease FtsH.</title>
        <authorList>
            <person name="Suno R."/>
            <person name="Niwa H."/>
            <person name="Tsuchiya D."/>
            <person name="Zhang X."/>
            <person name="Yoshida M."/>
            <person name="Morikawa K."/>
        </authorList>
    </citation>
    <scope>X-RAY CRYSTALLOGRAPHY (3.9 ANGSTROMS) OF 126-624</scope>
    <scope>SUBUNIT</scope>
    <scope>MUTAGENESIS OF GLY-399</scope>
    <scope>PROTEOLYTIC ACTIVITY</scope>
    <scope>ATP-DEPENDENCE</scope>
</reference>
<organism>
    <name type="scientific">Thermus thermophilus (strain ATCC 27634 / DSM 579 / HB8)</name>
    <dbReference type="NCBI Taxonomy" id="300852"/>
    <lineage>
        <taxon>Bacteria</taxon>
        <taxon>Thermotogati</taxon>
        <taxon>Deinococcota</taxon>
        <taxon>Deinococci</taxon>
        <taxon>Thermales</taxon>
        <taxon>Thermaceae</taxon>
        <taxon>Thermus</taxon>
    </lineage>
</organism>
<comment type="function">
    <text evidence="1">Acts as a processive, ATP-dependent zinc metallopeptidase for both cytoplasmic and membrane proteins. Plays a role in the quality control of integral membrane proteins.</text>
</comment>
<comment type="function">
    <text>Degrades preferentially unfolded substrates in a processive, ATP-dependent manner, usually after hydrophobic residues.</text>
</comment>
<comment type="cofactor">
    <cofactor evidence="1">
        <name>Zn(2+)</name>
        <dbReference type="ChEBI" id="CHEBI:29105"/>
    </cofactor>
    <text evidence="1">Binds 1 zinc ion per subunit.</text>
</comment>
<comment type="activity regulation">
    <text evidence="3">The proteolytic activity is dependent on ATP, both the ATPase and protease activities are inhibited by ADP.</text>
</comment>
<comment type="subunit">
    <text evidence="4">The isolated soluble domain (residues 126-624) forms a stable hexamer in which the AAA+ domains (residues 126-400) are alternatively open or closed.</text>
</comment>
<comment type="subcellular location">
    <subcellularLocation>
        <location evidence="6">Cell inner membrane</location>
        <topology evidence="1">Multi-pass membrane protein</topology>
        <orientation evidence="1">Cytoplasmic side</orientation>
    </subcellularLocation>
</comment>
<comment type="domain">
    <text>The open AAA+ domain (residues 126-400) probably allows nucleotide exchange and has the protease active site, while the closed domain is the active ATPase domain but the protease is inactive.</text>
</comment>
<comment type="similarity">
    <text evidence="1">In the central section; belongs to the AAA ATPase family.</text>
</comment>
<comment type="similarity">
    <text evidence="1">In the C-terminal section; belongs to the peptidase M41 family.</text>
</comment>
<gene>
    <name evidence="1" type="primary">ftsH</name>
    <name type="ordered locus">TTHA1492</name>
</gene>
<evidence type="ECO:0000255" key="1">
    <source>
        <dbReference type="HAMAP-Rule" id="MF_01458"/>
    </source>
</evidence>
<evidence type="ECO:0000256" key="2">
    <source>
        <dbReference type="SAM" id="MobiDB-lite"/>
    </source>
</evidence>
<evidence type="ECO:0000269" key="3">
    <source>
    </source>
</evidence>
<evidence type="ECO:0000269" key="4">
    <source>
    </source>
</evidence>
<evidence type="ECO:0000305" key="5"/>
<evidence type="ECO:0000305" key="6">
    <source>
    </source>
</evidence>
<evidence type="ECO:0007829" key="7">
    <source>
        <dbReference type="PDB" id="1IXZ"/>
    </source>
</evidence>
<evidence type="ECO:0007829" key="8">
    <source>
        <dbReference type="PDB" id="1IY1"/>
    </source>
</evidence>
<evidence type="ECO:0007829" key="9">
    <source>
        <dbReference type="PDB" id="1IY2"/>
    </source>
</evidence>
<feature type="chain" id="PRO_0000400413" description="ATP-dependent zinc metalloprotease FtsH">
    <location>
        <begin position="1"/>
        <end position="624"/>
    </location>
</feature>
<feature type="topological domain" description="Cytoplasmic" evidence="1">
    <location>
        <begin position="1"/>
        <end position="7"/>
    </location>
</feature>
<feature type="transmembrane region" description="Helical" evidence="1">
    <location>
        <begin position="8"/>
        <end position="28"/>
    </location>
</feature>
<feature type="topological domain" description="Periplasmic" evidence="1">
    <location>
        <begin position="29"/>
        <end position="103"/>
    </location>
</feature>
<feature type="transmembrane region" description="Helical" evidence="1">
    <location>
        <begin position="104"/>
        <end position="124"/>
    </location>
</feature>
<feature type="topological domain" description="Cytoplasmic" evidence="1">
    <location>
        <begin position="125"/>
        <end position="624"/>
    </location>
</feature>
<feature type="region of interest" description="Disordered" evidence="2">
    <location>
        <begin position="595"/>
        <end position="624"/>
    </location>
</feature>
<feature type="compositionally biased region" description="Basic and acidic residues" evidence="2">
    <location>
        <begin position="600"/>
        <end position="609"/>
    </location>
</feature>
<feature type="active site" evidence="1">
    <location>
        <position position="419"/>
    </location>
</feature>
<feature type="binding site">
    <location>
        <position position="159"/>
    </location>
    <ligand>
        <name>ATP</name>
        <dbReference type="ChEBI" id="CHEBI:30616"/>
    </ligand>
</feature>
<feature type="binding site">
    <location>
        <begin position="199"/>
        <end position="203"/>
    </location>
    <ligand>
        <name>ATP</name>
        <dbReference type="ChEBI" id="CHEBI:30616"/>
    </ligand>
</feature>
<feature type="binding site">
    <location>
        <position position="204"/>
    </location>
    <ligand>
        <name>ATP</name>
        <dbReference type="ChEBI" id="CHEBI:30616"/>
    </ligand>
</feature>
<feature type="binding site" evidence="1">
    <location>
        <position position="418"/>
    </location>
    <ligand>
        <name>Zn(2+)</name>
        <dbReference type="ChEBI" id="CHEBI:29105"/>
        <note>catalytic</note>
    </ligand>
</feature>
<feature type="binding site" evidence="1">
    <location>
        <position position="422"/>
    </location>
    <ligand>
        <name>Zn(2+)</name>
        <dbReference type="ChEBI" id="CHEBI:29105"/>
        <note>catalytic</note>
    </ligand>
</feature>
<feature type="binding site" evidence="1">
    <location>
        <position position="493"/>
    </location>
    <ligand>
        <name>Zn(2+)</name>
        <dbReference type="ChEBI" id="CHEBI:29105"/>
        <note>catalytic</note>
    </ligand>
</feature>
<feature type="mutagenesis site" description="No effect on protease activity against alpha-casein." evidence="4">
    <original>G</original>
    <variation>L</variation>
    <location>
        <position position="399"/>
    </location>
</feature>
<feature type="sequence conflict" description="In Ref. 1; BAA96090 and 2; AB012390." evidence="5" ref="1 2">
    <original>AFSLA</original>
    <variation>PSASR</variation>
    <location>
        <begin position="21"/>
        <end position="25"/>
    </location>
</feature>
<feature type="helix" evidence="7">
    <location>
        <begin position="155"/>
        <end position="157"/>
    </location>
</feature>
<feature type="strand" evidence="9">
    <location>
        <begin position="158"/>
        <end position="160"/>
    </location>
</feature>
<feature type="helix" evidence="7">
    <location>
        <begin position="162"/>
        <end position="176"/>
    </location>
</feature>
<feature type="helix" evidence="7">
    <location>
        <begin position="178"/>
        <end position="183"/>
    </location>
</feature>
<feature type="strand" evidence="7">
    <location>
        <begin position="190"/>
        <end position="195"/>
    </location>
</feature>
<feature type="strand" evidence="8">
    <location>
        <begin position="198"/>
        <end position="201"/>
    </location>
</feature>
<feature type="helix" evidence="7">
    <location>
        <begin position="202"/>
        <end position="212"/>
    </location>
</feature>
<feature type="strand" evidence="7">
    <location>
        <begin position="217"/>
        <end position="221"/>
    </location>
</feature>
<feature type="helix" evidence="7">
    <location>
        <begin position="222"/>
        <end position="227"/>
    </location>
</feature>
<feature type="turn" evidence="9">
    <location>
        <begin position="229"/>
        <end position="231"/>
    </location>
</feature>
<feature type="helix" evidence="7">
    <location>
        <begin position="232"/>
        <end position="244"/>
    </location>
</feature>
<feature type="strand" evidence="7">
    <location>
        <begin position="247"/>
        <end position="255"/>
    </location>
</feature>
<feature type="helix" evidence="7">
    <location>
        <begin position="257"/>
        <end position="261"/>
    </location>
</feature>
<feature type="helix" evidence="7">
    <location>
        <begin position="273"/>
        <end position="287"/>
    </location>
</feature>
<feature type="strand" evidence="7">
    <location>
        <begin position="295"/>
        <end position="302"/>
    </location>
</feature>
<feature type="helix" evidence="7">
    <location>
        <begin position="304"/>
        <end position="306"/>
    </location>
</feature>
<feature type="helix" evidence="7">
    <location>
        <begin position="309"/>
        <end position="312"/>
    </location>
</feature>
<feature type="strand" evidence="7">
    <location>
        <begin position="319"/>
        <end position="322"/>
    </location>
</feature>
<feature type="helix" evidence="7">
    <location>
        <begin position="328"/>
        <end position="339"/>
    </location>
</feature>
<feature type="helix" evidence="7">
    <location>
        <begin position="350"/>
        <end position="355"/>
    </location>
</feature>
<feature type="helix" evidence="7">
    <location>
        <begin position="362"/>
        <end position="378"/>
    </location>
</feature>
<feature type="strand" evidence="7">
    <location>
        <begin position="382"/>
        <end position="384"/>
    </location>
</feature>
<feature type="helix" evidence="7">
    <location>
        <begin position="386"/>
        <end position="392"/>
    </location>
</feature>
<accession>Q5SI82</accession>
<accession>Q9LCZ4</accession>
<sequence length="624" mass="68452">MPRAPFSLLALVLGLAFLAWAFSLAGTVGAPSGTVNYTTFLEDLKAGRVKEVVVRAGDTRIQGVLEDGSAFTTYAASPPDNATLEGWMARGVSVRVEPPQGQNALGFLWPLLLVGLLIGALYYFSRNGRAGPSDSAFSFTKSRARVLTEAPKVTFKDVAGAEEAKEELKEIVEFLKNPSRFHEMGARIPKGVLLVGPPGVGKTHLARAVAGEARVPFITASGSDFVEMFVGVGAARVRDLFETAKRHAPCIVFIDEIDAVGRKRGSGVGGGNDEREQTLNQLLVEMDGFEKDTAIVVMAATNRPDILDPALLRPGRFDRQIAIDAPDVKGREQILRIHARGKPLAEDVDLALLAKRTPGFVGADLENLLNEAALLAAREGRRKITMKDLEEAADRVMMGPAKKSLVLSPRDRRITAYHEAGHALAAHFLEHADGVHKVTIVPRGRALGFMMPRREDMLHWSRKRLLDQIAVALAGRAAEEIVFDDVTTGAENDFRQATELARRMITEWGMHPEFGPVAYAVREDTYLGGYDVRQYSEETAKRIDEAVRRLIEEQYQRVKALLLEKREVLERVAETLLERETLTAEEFQRVVEGLPLEAPEEAREEREPPRVVPKVKPGGALGGA</sequence>